<keyword id="KW-1185">Reference proteome</keyword>
<keyword id="KW-0687">Ribonucleoprotein</keyword>
<keyword id="KW-0689">Ribosomal protein</keyword>
<organism>
    <name type="scientific">Haloquadratum walsbyi (strain DSM 16790 / HBSQ001)</name>
    <dbReference type="NCBI Taxonomy" id="362976"/>
    <lineage>
        <taxon>Archaea</taxon>
        <taxon>Methanobacteriati</taxon>
        <taxon>Methanobacteriota</taxon>
        <taxon>Stenosarchaea group</taxon>
        <taxon>Halobacteria</taxon>
        <taxon>Halobacteriales</taxon>
        <taxon>Haloferacaceae</taxon>
        <taxon>Haloquadratum</taxon>
    </lineage>
</organism>
<comment type="similarity">
    <text evidence="1">Belongs to the eukaryotic ribosomal protein eL39 family.</text>
</comment>
<accession>Q18EU6</accession>
<name>RL39_HALWD</name>
<feature type="chain" id="PRO_1000051682" description="Large ribosomal subunit protein eL39">
    <location>
        <begin position="1"/>
        <end position="50"/>
    </location>
</feature>
<feature type="region of interest" description="Disordered" evidence="2">
    <location>
        <begin position="1"/>
        <end position="21"/>
    </location>
</feature>
<feature type="compositionally biased region" description="Basic residues" evidence="2">
    <location>
        <begin position="1"/>
        <end position="12"/>
    </location>
</feature>
<gene>
    <name evidence="1" type="primary">rpl39e</name>
    <name type="ordered locus">HQ_3424A</name>
</gene>
<protein>
    <recommendedName>
        <fullName evidence="1">Large ribosomal subunit protein eL39</fullName>
    </recommendedName>
    <alternativeName>
        <fullName evidence="3">50S ribosomal protein L39e</fullName>
    </alternativeName>
</protein>
<reference key="1">
    <citation type="journal article" date="2006" name="BMC Genomics">
        <title>The genome of the square archaeon Haloquadratum walsbyi: life at the limits of water activity.</title>
        <authorList>
            <person name="Bolhuis H."/>
            <person name="Palm P."/>
            <person name="Wende A."/>
            <person name="Falb M."/>
            <person name="Rampp M."/>
            <person name="Rodriguez-Valera F."/>
            <person name="Pfeiffer F."/>
            <person name="Oesterhelt D."/>
        </authorList>
    </citation>
    <scope>NUCLEOTIDE SEQUENCE [LARGE SCALE GENOMIC DNA]</scope>
    <source>
        <strain>DSM 16790 / HBSQ001</strain>
    </source>
</reference>
<sequence length="50" mass="6013">MGKKSKAKKKRLGKLEKQNSRVPAWVMLKTNMEVTRNPKRRNWRRSDTDE</sequence>
<dbReference type="EMBL" id="AM180088">
    <property type="protein sequence ID" value="CAJ53521.1"/>
    <property type="molecule type" value="Genomic_DNA"/>
</dbReference>
<dbReference type="RefSeq" id="WP_011572618.1">
    <property type="nucleotide sequence ID" value="NC_008212.1"/>
</dbReference>
<dbReference type="SMR" id="Q18EU6"/>
<dbReference type="STRING" id="362976.HQ_3424A"/>
<dbReference type="GeneID" id="4194624"/>
<dbReference type="KEGG" id="hwa:HQ_3424A"/>
<dbReference type="eggNOG" id="arCOG04177">
    <property type="taxonomic scope" value="Archaea"/>
</dbReference>
<dbReference type="HOGENOM" id="CLU_181948_4_0_2"/>
<dbReference type="Proteomes" id="UP000001975">
    <property type="component" value="Chromosome"/>
</dbReference>
<dbReference type="GO" id="GO:1990904">
    <property type="term" value="C:ribonucleoprotein complex"/>
    <property type="evidence" value="ECO:0007669"/>
    <property type="project" value="UniProtKB-KW"/>
</dbReference>
<dbReference type="GO" id="GO:0005840">
    <property type="term" value="C:ribosome"/>
    <property type="evidence" value="ECO:0007669"/>
    <property type="project" value="UniProtKB-KW"/>
</dbReference>
<dbReference type="GO" id="GO:0003735">
    <property type="term" value="F:structural constituent of ribosome"/>
    <property type="evidence" value="ECO:0007669"/>
    <property type="project" value="InterPro"/>
</dbReference>
<dbReference type="GO" id="GO:0006412">
    <property type="term" value="P:translation"/>
    <property type="evidence" value="ECO:0007669"/>
    <property type="project" value="UniProtKB-UniRule"/>
</dbReference>
<dbReference type="FunFam" id="1.10.1620.10:FF:000001">
    <property type="entry name" value="60S ribosomal protein-like L39"/>
    <property type="match status" value="1"/>
</dbReference>
<dbReference type="Gene3D" id="1.10.1620.10">
    <property type="entry name" value="Ribosomal protein L39e"/>
    <property type="match status" value="1"/>
</dbReference>
<dbReference type="HAMAP" id="MF_00629">
    <property type="entry name" value="Ribosomal_eL39"/>
    <property type="match status" value="1"/>
</dbReference>
<dbReference type="InterPro" id="IPR000077">
    <property type="entry name" value="Ribosomal_eL39"/>
</dbReference>
<dbReference type="InterPro" id="IPR020083">
    <property type="entry name" value="Ribosomal_eL39_CS"/>
</dbReference>
<dbReference type="InterPro" id="IPR023626">
    <property type="entry name" value="Ribosomal_eL39_dom_sf"/>
</dbReference>
<dbReference type="NCBIfam" id="NF002316">
    <property type="entry name" value="PRK01242.1"/>
    <property type="match status" value="1"/>
</dbReference>
<dbReference type="Pfam" id="PF00832">
    <property type="entry name" value="Ribosomal_L39"/>
    <property type="match status" value="1"/>
</dbReference>
<dbReference type="SUPFAM" id="SSF48662">
    <property type="entry name" value="Ribosomal protein L39e"/>
    <property type="match status" value="1"/>
</dbReference>
<dbReference type="PROSITE" id="PS00051">
    <property type="entry name" value="RIBOSOMAL_L39E"/>
    <property type="match status" value="1"/>
</dbReference>
<evidence type="ECO:0000255" key="1">
    <source>
        <dbReference type="HAMAP-Rule" id="MF_00629"/>
    </source>
</evidence>
<evidence type="ECO:0000256" key="2">
    <source>
        <dbReference type="SAM" id="MobiDB-lite"/>
    </source>
</evidence>
<evidence type="ECO:0000305" key="3"/>
<proteinExistence type="inferred from homology"/>